<name>RBTN1_HUMAN</name>
<protein>
    <recommendedName>
        <fullName>Rhombotin-1</fullName>
    </recommendedName>
    <alternativeName>
        <fullName>Cysteine-rich protein TTG-1</fullName>
    </alternativeName>
    <alternativeName>
        <fullName>LIM domain only protein 1</fullName>
        <shortName>LMO-1</shortName>
    </alternativeName>
    <alternativeName>
        <fullName>T-cell translocation protein 1</fullName>
    </alternativeName>
</protein>
<sequence>MMVLDKEDGVPMLSVQPKGKQKGCAGCNRKIKDRYLLKALDKYWHEDCLKCACCDCRLGEVGSTLYTKANLILCRRDYLRLFGTTGNCAACSKLIPAFEMVMRARDNVYHLDCFACQLCNQRFCVGDKFFLKNNMILCQMDYEEGQLNGTFESQVQ</sequence>
<dbReference type="EMBL" id="M26682">
    <property type="protein sequence ID" value="AAA36819.1"/>
    <property type="molecule type" value="mRNA"/>
</dbReference>
<dbReference type="EMBL" id="AJ277662">
    <property type="protein sequence ID" value="CAC14587.1"/>
    <property type="molecule type" value="Genomic_DNA"/>
</dbReference>
<dbReference type="EMBL" id="AC091013">
    <property type="status" value="NOT_ANNOTATED_CDS"/>
    <property type="molecule type" value="Genomic_DNA"/>
</dbReference>
<dbReference type="EMBL" id="BC039512">
    <property type="protein sequence ID" value="AAH39512.1"/>
    <property type="status" value="ALT_INIT"/>
    <property type="molecule type" value="mRNA"/>
</dbReference>
<dbReference type="EMBL" id="BC069673">
    <property type="protein sequence ID" value="AAH69673.1"/>
    <property type="molecule type" value="mRNA"/>
</dbReference>
<dbReference type="EMBL" id="BC069752">
    <property type="protein sequence ID" value="AAH69752.1"/>
    <property type="molecule type" value="mRNA"/>
</dbReference>
<dbReference type="EMBL" id="BC069793">
    <property type="protein sequence ID" value="AAH69793.1"/>
    <property type="molecule type" value="mRNA"/>
</dbReference>
<dbReference type="EMBL" id="BC096056">
    <property type="protein sequence ID" value="AAH96056.1"/>
    <property type="molecule type" value="mRNA"/>
</dbReference>
<dbReference type="EMBL" id="BC096057">
    <property type="protein sequence ID" value="AAH96057.1"/>
    <property type="molecule type" value="mRNA"/>
</dbReference>
<dbReference type="CCDS" id="CCDS44534.1">
    <molecule id="P25800-1"/>
</dbReference>
<dbReference type="CCDS" id="CCDS58118.1">
    <molecule id="P25800-2"/>
</dbReference>
<dbReference type="PIR" id="A32795">
    <property type="entry name" value="A32795"/>
</dbReference>
<dbReference type="RefSeq" id="NP_001257357.1">
    <molecule id="P25800-2"/>
    <property type="nucleotide sequence ID" value="NM_001270428.2"/>
</dbReference>
<dbReference type="RefSeq" id="NP_002306.1">
    <molecule id="P25800-1"/>
    <property type="nucleotide sequence ID" value="NM_002315.3"/>
</dbReference>
<dbReference type="SMR" id="P25800"/>
<dbReference type="BioGRID" id="110190">
    <property type="interactions" value="152"/>
</dbReference>
<dbReference type="FunCoup" id="P25800">
    <property type="interactions" value="1644"/>
</dbReference>
<dbReference type="IntAct" id="P25800">
    <property type="interactions" value="137"/>
</dbReference>
<dbReference type="MINT" id="P25800"/>
<dbReference type="STRING" id="9606.ENSP00000338207"/>
<dbReference type="iPTMnet" id="P25800"/>
<dbReference type="PhosphoSitePlus" id="P25800"/>
<dbReference type="BioMuta" id="LMO1"/>
<dbReference type="DMDM" id="132532"/>
<dbReference type="MassIVE" id="P25800"/>
<dbReference type="PaxDb" id="9606-ENSP00000338207"/>
<dbReference type="PeptideAtlas" id="P25800"/>
<dbReference type="ProteomicsDB" id="23606"/>
<dbReference type="ProteomicsDB" id="54297">
    <molecule id="P25800-1"/>
</dbReference>
<dbReference type="Antibodypedia" id="5875">
    <property type="antibodies" value="156 antibodies from 25 providers"/>
</dbReference>
<dbReference type="DNASU" id="4004"/>
<dbReference type="Ensembl" id="ENST00000335790.8">
    <molecule id="P25800-1"/>
    <property type="protein sequence ID" value="ENSP00000338207.3"/>
    <property type="gene ID" value="ENSG00000166407.14"/>
</dbReference>
<dbReference type="Ensembl" id="ENST00000428101.6">
    <molecule id="P25800-2"/>
    <property type="protein sequence ID" value="ENSP00000404538.2"/>
    <property type="gene ID" value="ENSG00000166407.14"/>
</dbReference>
<dbReference type="GeneID" id="4004"/>
<dbReference type="KEGG" id="hsa:4004"/>
<dbReference type="MANE-Select" id="ENST00000335790.8">
    <property type="protein sequence ID" value="ENSP00000338207.3"/>
    <property type="RefSeq nucleotide sequence ID" value="NM_002315.3"/>
    <property type="RefSeq protein sequence ID" value="NP_002306.1"/>
</dbReference>
<dbReference type="UCSC" id="uc001mgg.3">
    <molecule id="P25800-1"/>
    <property type="organism name" value="human"/>
</dbReference>
<dbReference type="AGR" id="HGNC:6641"/>
<dbReference type="CTD" id="4004"/>
<dbReference type="DisGeNET" id="4004"/>
<dbReference type="GeneCards" id="LMO1"/>
<dbReference type="HGNC" id="HGNC:6641">
    <property type="gene designation" value="LMO1"/>
</dbReference>
<dbReference type="HPA" id="ENSG00000166407">
    <property type="expression patterns" value="Tissue enhanced (skeletal muscle, tongue)"/>
</dbReference>
<dbReference type="MalaCards" id="LMO1"/>
<dbReference type="MIM" id="186921">
    <property type="type" value="gene+phenotype"/>
</dbReference>
<dbReference type="neXtProt" id="NX_P25800"/>
<dbReference type="OpenTargets" id="ENSG00000166407"/>
<dbReference type="Orphanet" id="635">
    <property type="disease" value="Neuroblastoma"/>
</dbReference>
<dbReference type="PharmGKB" id="PA30407"/>
<dbReference type="VEuPathDB" id="HostDB:ENSG00000166407"/>
<dbReference type="eggNOG" id="KOG0490">
    <property type="taxonomic scope" value="Eukaryota"/>
</dbReference>
<dbReference type="GeneTree" id="ENSGT00940000153908"/>
<dbReference type="InParanoid" id="P25800"/>
<dbReference type="OMA" id="IRDRYML"/>
<dbReference type="OrthoDB" id="6352355at2759"/>
<dbReference type="PAN-GO" id="P25800">
    <property type="GO annotations" value="4 GO annotations based on evolutionary models"/>
</dbReference>
<dbReference type="PhylomeDB" id="P25800"/>
<dbReference type="TreeFam" id="TF351071"/>
<dbReference type="PathwayCommons" id="P25800"/>
<dbReference type="Reactome" id="R-HSA-8939236">
    <property type="pathway name" value="RUNX1 regulates transcription of genes involved in differentiation of HSCs"/>
</dbReference>
<dbReference type="SignaLink" id="P25800"/>
<dbReference type="SIGNOR" id="P25800"/>
<dbReference type="BioGRID-ORCS" id="4004">
    <property type="hits" value="19 hits in 1158 CRISPR screens"/>
</dbReference>
<dbReference type="ChiTaRS" id="LMO1">
    <property type="organism name" value="human"/>
</dbReference>
<dbReference type="GeneWiki" id="LMO1"/>
<dbReference type="GenomeRNAi" id="4004"/>
<dbReference type="Pharos" id="P25800">
    <property type="development level" value="Tbio"/>
</dbReference>
<dbReference type="PRO" id="PR:P25800"/>
<dbReference type="Proteomes" id="UP000005640">
    <property type="component" value="Chromosome 11"/>
</dbReference>
<dbReference type="RNAct" id="P25800">
    <property type="molecule type" value="protein"/>
</dbReference>
<dbReference type="Bgee" id="ENSG00000166407">
    <property type="expression patterns" value="Expressed in primordial germ cell in gonad and 108 other cell types or tissues"/>
</dbReference>
<dbReference type="ExpressionAtlas" id="P25800">
    <property type="expression patterns" value="baseline and differential"/>
</dbReference>
<dbReference type="GO" id="GO:0005654">
    <property type="term" value="C:nucleoplasm"/>
    <property type="evidence" value="ECO:0000304"/>
    <property type="project" value="Reactome"/>
</dbReference>
<dbReference type="GO" id="GO:0005634">
    <property type="term" value="C:nucleus"/>
    <property type="evidence" value="ECO:0000250"/>
    <property type="project" value="UniProtKB"/>
</dbReference>
<dbReference type="GO" id="GO:0140297">
    <property type="term" value="F:DNA-binding transcription factor binding"/>
    <property type="evidence" value="ECO:0000318"/>
    <property type="project" value="GO_Central"/>
</dbReference>
<dbReference type="GO" id="GO:0046872">
    <property type="term" value="F:metal ion binding"/>
    <property type="evidence" value="ECO:0007669"/>
    <property type="project" value="UniProtKB-KW"/>
</dbReference>
<dbReference type="GO" id="GO:0003713">
    <property type="term" value="F:transcription coactivator activity"/>
    <property type="evidence" value="ECO:0000318"/>
    <property type="project" value="GO_Central"/>
</dbReference>
<dbReference type="GO" id="GO:0000122">
    <property type="term" value="P:negative regulation of transcription by RNA polymerase II"/>
    <property type="evidence" value="ECO:0007669"/>
    <property type="project" value="Ensembl"/>
</dbReference>
<dbReference type="GO" id="GO:0045944">
    <property type="term" value="P:positive regulation of transcription by RNA polymerase II"/>
    <property type="evidence" value="ECO:0000315"/>
    <property type="project" value="BHF-UCL"/>
</dbReference>
<dbReference type="GO" id="GO:0046013">
    <property type="term" value="P:regulation of T cell homeostatic proliferation"/>
    <property type="evidence" value="ECO:0007669"/>
    <property type="project" value="Ensembl"/>
</dbReference>
<dbReference type="CDD" id="cd09388">
    <property type="entry name" value="LIM1_LMO1_LMO3"/>
    <property type="match status" value="1"/>
</dbReference>
<dbReference type="CDD" id="cd09389">
    <property type="entry name" value="LIM2_LMO1_LMO3"/>
    <property type="match status" value="1"/>
</dbReference>
<dbReference type="FunFam" id="2.10.110.10:FF:000015">
    <property type="entry name" value="LIM domain only 3"/>
    <property type="match status" value="1"/>
</dbReference>
<dbReference type="FunFam" id="2.10.110.10:FF:000016">
    <property type="entry name" value="LIM domain only 3"/>
    <property type="match status" value="1"/>
</dbReference>
<dbReference type="Gene3D" id="2.10.110.10">
    <property type="entry name" value="Cysteine Rich Protein"/>
    <property type="match status" value="2"/>
</dbReference>
<dbReference type="InterPro" id="IPR050945">
    <property type="entry name" value="LMO_RBTN_TF"/>
</dbReference>
<dbReference type="InterPro" id="IPR001781">
    <property type="entry name" value="Znf_LIM"/>
</dbReference>
<dbReference type="PANTHER" id="PTHR45787">
    <property type="entry name" value="LD11652P"/>
    <property type="match status" value="1"/>
</dbReference>
<dbReference type="PANTHER" id="PTHR45787:SF2">
    <property type="entry name" value="RHOMBOTIN-1"/>
    <property type="match status" value="1"/>
</dbReference>
<dbReference type="Pfam" id="PF00412">
    <property type="entry name" value="LIM"/>
    <property type="match status" value="2"/>
</dbReference>
<dbReference type="SMART" id="SM00132">
    <property type="entry name" value="LIM"/>
    <property type="match status" value="2"/>
</dbReference>
<dbReference type="SUPFAM" id="SSF57716">
    <property type="entry name" value="Glucocorticoid receptor-like (DNA-binding domain)"/>
    <property type="match status" value="3"/>
</dbReference>
<dbReference type="PROSITE" id="PS00478">
    <property type="entry name" value="LIM_DOMAIN_1"/>
    <property type="match status" value="2"/>
</dbReference>
<dbReference type="PROSITE" id="PS50023">
    <property type="entry name" value="LIM_DOMAIN_2"/>
    <property type="match status" value="2"/>
</dbReference>
<accession>P25800</accession>
<accession>E9PSF5</accession>
<accession>Q4VBC5</accession>
<accession>Q8IXR0</accession>
<evidence type="ECO:0000250" key="1"/>
<evidence type="ECO:0000255" key="2">
    <source>
        <dbReference type="PROSITE-ProRule" id="PRU00125"/>
    </source>
</evidence>
<evidence type="ECO:0000269" key="3">
    <source>
    </source>
</evidence>
<evidence type="ECO:0000269" key="4">
    <source>
    </source>
</evidence>
<evidence type="ECO:0000303" key="5">
    <source>
    </source>
</evidence>
<evidence type="ECO:0000305" key="6"/>
<comment type="function">
    <text evidence="3">May be involved in gene regulation within neural lineage cells potentially by direct DNA binding or by binding to other transcription factors.</text>
</comment>
<comment type="interaction">
    <interactant intactId="EBI-8639312">
        <id>P25800</id>
    </interactant>
    <interactant intactId="EBI-11743294">
        <id>Q8IZP0-5</id>
        <label>ABI1</label>
    </interactant>
    <organismsDiffer>false</organismsDiffer>
    <experiments>3</experiments>
</comment>
<comment type="interaction">
    <interactant intactId="EBI-8639312">
        <id>P25800</id>
    </interactant>
    <interactant intactId="EBI-11096309">
        <id>Q9NYB9-2</id>
        <label>ABI2</label>
    </interactant>
    <organismsDiffer>false</organismsDiffer>
    <experiments>8</experiments>
</comment>
<comment type="interaction">
    <interactant intactId="EBI-8639312">
        <id>P25800</id>
    </interactant>
    <interactant intactId="EBI-10173507">
        <id>Q6UY14-3</id>
        <label>ADAMTSL4</label>
    </interactant>
    <organismsDiffer>false</organismsDiffer>
    <experiments>3</experiments>
</comment>
<comment type="interaction">
    <interactant intactId="EBI-8639312">
        <id>P25800</id>
    </interactant>
    <interactant intactId="EBI-11745576">
        <id>Q6PJH3</id>
        <label>AKAP9</label>
    </interactant>
    <organismsDiffer>false</organismsDiffer>
    <experiments>3</experiments>
</comment>
<comment type="interaction">
    <interactant intactId="EBI-8639312">
        <id>P25800</id>
    </interactant>
    <interactant intactId="EBI-2799297">
        <id>Q7Z591</id>
        <label>AKNA</label>
    </interactant>
    <organismsDiffer>false</organismsDiffer>
    <experiments>3</experiments>
</comment>
<comment type="interaction">
    <interactant intactId="EBI-8639312">
        <id>P25800</id>
    </interactant>
    <interactant intactId="EBI-12809012">
        <id>Q8WXK1</id>
        <label>ASB15</label>
    </interactant>
    <organismsDiffer>false</organismsDiffer>
    <experiments>3</experiments>
</comment>
<comment type="interaction">
    <interactant intactId="EBI-8639312">
        <id>P25800</id>
    </interactant>
    <interactant intactId="EBI-11524452">
        <id>Q8N9N5-2</id>
        <label>BANP</label>
    </interactant>
    <organismsDiffer>false</organismsDiffer>
    <experiments>3</experiments>
</comment>
<comment type="interaction">
    <interactant intactId="EBI-8639312">
        <id>P25800</id>
    </interactant>
    <interactant intactId="EBI-1050106">
        <id>O75934</id>
        <label>BCAS2</label>
    </interactant>
    <organismsDiffer>false</organismsDiffer>
    <experiments>3</experiments>
</comment>
<comment type="interaction">
    <interactant intactId="EBI-8639312">
        <id>P25800</id>
    </interactant>
    <interactant intactId="EBI-10183342">
        <id>Q9H165-2</id>
        <label>BCL11A</label>
    </interactant>
    <organismsDiffer>false</organismsDiffer>
    <experiments>3</experiments>
</comment>
<comment type="interaction">
    <interactant intactId="EBI-8639312">
        <id>P25800</id>
    </interactant>
    <interactant intactId="EBI-12191873">
        <id>Q86UB2</id>
        <label>BIVM</label>
    </interactant>
    <organismsDiffer>false</organismsDiffer>
    <experiments>3</experiments>
</comment>
<comment type="interaction">
    <interactant intactId="EBI-8639312">
        <id>P25800</id>
    </interactant>
    <interactant intactId="EBI-2548012">
        <id>Q9H2G9</id>
        <label>BLZF1</label>
    </interactant>
    <organismsDiffer>false</organismsDiffer>
    <experiments>7</experiments>
</comment>
<comment type="interaction">
    <interactant intactId="EBI-8639312">
        <id>P25800</id>
    </interactant>
    <interactant intactId="EBI-6115618">
        <id>Q6ZN30</id>
        <label>BNC2</label>
    </interactant>
    <organismsDiffer>false</organismsDiffer>
    <experiments>3</experiments>
</comment>
<comment type="interaction">
    <interactant intactId="EBI-8639312">
        <id>P25800</id>
    </interactant>
    <interactant intactId="EBI-358049">
        <id>Q13895</id>
        <label>BYSL</label>
    </interactant>
    <organismsDiffer>false</organismsDiffer>
    <experiments>3</experiments>
</comment>
<comment type="interaction">
    <interactant intactId="EBI-8639312">
        <id>P25800</id>
    </interactant>
    <interactant intactId="EBI-751319">
        <id>Q9H257</id>
        <label>CARD9</label>
    </interactant>
    <organismsDiffer>false</organismsDiffer>
    <experiments>3</experiments>
</comment>
<comment type="interaction">
    <interactant intactId="EBI-8639312">
        <id>P25800</id>
    </interactant>
    <interactant intactId="EBI-741724">
        <id>Q8NA61</id>
        <label>CBY2</label>
    </interactant>
    <organismsDiffer>false</organismsDiffer>
    <experiments>3</experiments>
</comment>
<comment type="interaction">
    <interactant intactId="EBI-8639312">
        <id>P25800</id>
    </interactant>
    <interactant intactId="EBI-347573">
        <id>A6NC98</id>
        <label>CCDC88B</label>
    </interactant>
    <organismsDiffer>false</organismsDiffer>
    <experiments>3</experiments>
</comment>
<comment type="interaction">
    <interactant intactId="EBI-8639312">
        <id>P25800</id>
    </interactant>
    <interactant intactId="EBI-5278764">
        <id>Q96GN5</id>
        <label>CDCA7L</label>
    </interactant>
    <organismsDiffer>false</organismsDiffer>
    <experiments>3</experiments>
</comment>
<comment type="interaction">
    <interactant intactId="EBI-8639312">
        <id>P25800</id>
    </interactant>
    <interactant intactId="EBI-10181162">
        <id>O14627</id>
        <label>CDX4</label>
    </interactant>
    <organismsDiffer>false</organismsDiffer>
    <experiments>3</experiments>
</comment>
<comment type="interaction">
    <interactant intactId="EBI-8639312">
        <id>P25800</id>
    </interactant>
    <interactant intactId="EBI-743488">
        <id>Q96L14</id>
        <label>CEP170P1</label>
    </interactant>
    <organismsDiffer>false</organismsDiffer>
    <experiments>3</experiments>
</comment>
<comment type="interaction">
    <interactant intactId="EBI-8639312">
        <id>P25800</id>
    </interactant>
    <interactant intactId="EBI-744115">
        <id>Q9C0F1</id>
        <label>CEP44</label>
    </interactant>
    <organismsDiffer>false</organismsDiffer>
    <experiments>3</experiments>
</comment>
<comment type="interaction">
    <interactant intactId="EBI-8639312">
        <id>P25800</id>
    </interactant>
    <interactant intactId="EBI-1104570">
        <id>Q8IYX8</id>
        <label>CEP57L1</label>
    </interactant>
    <organismsDiffer>false</organismsDiffer>
    <experiments>3</experiments>
</comment>
<comment type="interaction">
    <interactant intactId="EBI-8639312">
        <id>P25800</id>
    </interactant>
    <interactant intactId="EBI-743375">
        <id>Q9NX63</id>
        <label>CHCHD3</label>
    </interactant>
    <organismsDiffer>false</organismsDiffer>
    <experiments>3</experiments>
</comment>
<comment type="interaction">
    <interactant intactId="EBI-8639312">
        <id>P25800</id>
    </interactant>
    <interactant intactId="EBI-742054">
        <id>Q96D03</id>
        <label>DDIT4L</label>
    </interactant>
    <organismsDiffer>false</organismsDiffer>
    <experiments>3</experiments>
</comment>
<comment type="interaction">
    <interactant intactId="EBI-8639312">
        <id>P25800</id>
    </interactant>
    <interactant intactId="EBI-852291">
        <id>O60447</id>
        <label>EVI5</label>
    </interactant>
    <organismsDiffer>false</organismsDiffer>
    <experiments>3</experiments>
</comment>
<comment type="interaction">
    <interactant intactId="EBI-8639312">
        <id>P25800</id>
    </interactant>
    <interactant intactId="EBI-12063229">
        <id>Q8IX29</id>
        <label>FBXO16</label>
    </interactant>
    <organismsDiffer>false</organismsDiffer>
    <experiments>3</experiments>
</comment>
<comment type="interaction">
    <interactant intactId="EBI-8639312">
        <id>P25800</id>
    </interactant>
    <interactant intactId="EBI-618165">
        <id>Q06547</id>
        <label>GABPB1</label>
    </interactant>
    <organismsDiffer>false</organismsDiffer>
    <experiments>4</experiments>
</comment>
<comment type="interaction">
    <interactant intactId="EBI-8639312">
        <id>P25800</id>
    </interactant>
    <interactant intactId="EBI-1052570">
        <id>O95995</id>
        <label>GAS8</label>
    </interactant>
    <organismsDiffer>false</organismsDiffer>
    <experiments>3</experiments>
</comment>
<comment type="interaction">
    <interactant intactId="EBI-8639312">
        <id>P25800</id>
    </interactant>
    <interactant intactId="EBI-618309">
        <id>Q08379</id>
        <label>GOLGA2</label>
    </interactant>
    <organismsDiffer>false</organismsDiffer>
    <experiments>6</experiments>
</comment>
<comment type="interaction">
    <interactant intactId="EBI-8639312">
        <id>P25800</id>
    </interactant>
    <interactant intactId="EBI-11959863">
        <id>Q9NWQ4-1</id>
        <label>GPATCH2L</label>
    </interactant>
    <organismsDiffer>false</organismsDiffer>
    <experiments>3</experiments>
</comment>
<comment type="interaction">
    <interactant intactId="EBI-8639312">
        <id>P25800</id>
    </interactant>
    <interactant intactId="EBI-11519926">
        <id>Q6PI77</id>
        <label>GPRASP3</label>
    </interactant>
    <organismsDiffer>false</organismsDiffer>
    <experiments>3</experiments>
</comment>
<comment type="interaction">
    <interactant intactId="EBI-8639312">
        <id>P25800</id>
    </interactant>
    <interactant intactId="EBI-1052734">
        <id>Q7Z353</id>
        <label>HDX</label>
    </interactant>
    <organismsDiffer>false</organismsDiffer>
    <experiments>3</experiments>
</comment>
<comment type="interaction">
    <interactant intactId="EBI-8639312">
        <id>P25800</id>
    </interactant>
    <interactant intactId="EBI-740220">
        <id>O14964</id>
        <label>HGS</label>
    </interactant>
    <organismsDiffer>false</organismsDiffer>
    <experiments>3</experiments>
</comment>
<comment type="interaction">
    <interactant intactId="EBI-8639312">
        <id>P25800</id>
    </interactant>
    <interactant intactId="EBI-2549423">
        <id>Q6NT76</id>
        <label>HMBOX1</label>
    </interactant>
    <organismsDiffer>false</organismsDiffer>
    <experiments>3</experiments>
</comment>
<comment type="interaction">
    <interactant intactId="EBI-8639312">
        <id>P25800</id>
    </interactant>
    <interactant intactId="EBI-740641">
        <id>Q9NP66</id>
        <label>HMG20A</label>
    </interactant>
    <organismsDiffer>false</organismsDiffer>
    <experiments>3</experiments>
</comment>
<comment type="interaction">
    <interactant intactId="EBI-8639312">
        <id>P25800</id>
    </interactant>
    <interactant intactId="EBI-351590">
        <id>P31943</id>
        <label>HNRNPH1</label>
    </interactant>
    <organismsDiffer>false</organismsDiffer>
    <experiments>3</experiments>
</comment>
<comment type="interaction">
    <interactant intactId="EBI-8639312">
        <id>P25800</id>
    </interactant>
    <interactant intactId="EBI-486809">
        <id>P52272</id>
        <label>HNRNPM</label>
    </interactant>
    <organismsDiffer>false</organismsDiffer>
    <experiments>3</experiments>
</comment>
<comment type="interaction">
    <interactant intactId="EBI-8639312">
        <id>P25800</id>
    </interactant>
    <interactant intactId="EBI-739395">
        <id>Q16082</id>
        <label>HSPB2</label>
    </interactant>
    <organismsDiffer>false</organismsDiffer>
    <experiments>3</experiments>
</comment>
<comment type="interaction">
    <interactant intactId="EBI-8639312">
        <id>P25800</id>
    </interactant>
    <interactant intactId="EBI-11522367">
        <id>Q13422-7</id>
        <label>IKZF1</label>
    </interactant>
    <organismsDiffer>false</organismsDiffer>
    <experiments>3</experiments>
</comment>
<comment type="interaction">
    <interactant intactId="EBI-8639312">
        <id>P25800</id>
    </interactant>
    <interactant intactId="EBI-747204">
        <id>Q9UKT9</id>
        <label>IKZF3</label>
    </interactant>
    <organismsDiffer>false</organismsDiffer>
    <experiments>4</experiments>
</comment>
<comment type="interaction">
    <interactant intactId="EBI-8639312">
        <id>P25800</id>
    </interactant>
    <interactant intactId="EBI-2557660">
        <id>Q9ULR0</id>
        <label>ISY1</label>
    </interactant>
    <organismsDiffer>false</organismsDiffer>
    <experiments>3</experiments>
</comment>
<comment type="interaction">
    <interactant intactId="EBI-8639312">
        <id>P25800</id>
    </interactant>
    <interactant intactId="EBI-2556193">
        <id>Q63ZY3</id>
        <label>KANK2</label>
    </interactant>
    <organismsDiffer>false</organismsDiffer>
    <experiments>9</experiments>
</comment>
<comment type="interaction">
    <interactant intactId="EBI-8639312">
        <id>P25800</id>
    </interactant>
    <interactant intactId="EBI-9027502">
        <id>Q719H9</id>
        <label>KCTD1</label>
    </interactant>
    <organismsDiffer>false</organismsDiffer>
    <experiments>3</experiments>
</comment>
<comment type="interaction">
    <interactant intactId="EBI-8639312">
        <id>P25800</id>
    </interactant>
    <interactant intactId="EBI-3437878">
        <id>Q86T90</id>
        <label>KIAA1328</label>
    </interactant>
    <organismsDiffer>false</organismsDiffer>
    <experiments>3</experiments>
</comment>
<comment type="interaction">
    <interactant intactId="EBI-8639312">
        <id>P25800</id>
    </interactant>
    <interactant intactId="EBI-12893625">
        <id>Q5JUW0-3</id>
        <label>KRBOX4</label>
    </interactant>
    <organismsDiffer>false</organismsDiffer>
    <experiments>5</experiments>
</comment>
<comment type="interaction">
    <interactant intactId="EBI-8639312">
        <id>P25800</id>
    </interactant>
    <interactant intactId="EBI-356410">
        <id>P08779</id>
        <label>KRT16</label>
    </interactant>
    <organismsDiffer>false</organismsDiffer>
    <experiments>3</experiments>
</comment>
<comment type="interaction">
    <interactant intactId="EBI-8639312">
        <id>P25800</id>
    </interactant>
    <interactant intactId="EBI-10171697">
        <id>Q6A162</id>
        <label>KRT40</label>
    </interactant>
    <organismsDiffer>false</organismsDiffer>
    <experiments>3</experiments>
</comment>
<comment type="interaction">
    <interactant intactId="EBI-8639312">
        <id>P25800</id>
    </interactant>
    <interactant intactId="EBI-2949715">
        <id>O95678</id>
        <label>KRT75</label>
    </interactant>
    <organismsDiffer>false</organismsDiffer>
    <experiments>3</experiments>
</comment>
<comment type="interaction">
    <interactant intactId="EBI-8639312">
        <id>P25800</id>
    </interactant>
    <interactant intactId="EBI-677177">
        <id>Q86U70</id>
        <label>LDB1</label>
    </interactant>
    <organismsDiffer>false</organismsDiffer>
    <experiments>7</experiments>
</comment>
<comment type="interaction">
    <interactant intactId="EBI-8639312">
        <id>P25800</id>
    </interactant>
    <interactant intactId="EBI-11979761">
        <id>Q86U70-2</id>
        <label>LDB1</label>
    </interactant>
    <organismsDiffer>false</organismsDiffer>
    <experiments>6</experiments>
</comment>
<comment type="interaction">
    <interactant intactId="EBI-8639312">
        <id>P25800</id>
    </interactant>
    <interactant intactId="EBI-2865580">
        <id>O43679</id>
        <label>LDB2</label>
    </interactant>
    <organismsDiffer>false</organismsDiffer>
    <experiments>3</experiments>
</comment>
<comment type="interaction">
    <interactant intactId="EBI-8639312">
        <id>P25800</id>
    </interactant>
    <interactant intactId="EBI-744222">
        <id>O60711</id>
        <label>LPXN</label>
    </interactant>
    <organismsDiffer>false</organismsDiffer>
    <experiments>7</experiments>
</comment>
<comment type="interaction">
    <interactant intactId="EBI-8639312">
        <id>P25800</id>
    </interactant>
    <interactant intactId="EBI-1216080">
        <id>Q9Y250</id>
        <label>LZTS1</label>
    </interactant>
    <organismsDiffer>false</organismsDiffer>
    <experiments>3</experiments>
</comment>
<comment type="interaction">
    <interactant intactId="EBI-8639312">
        <id>P25800</id>
    </interactant>
    <interactant intactId="EBI-741037">
        <id>Q9BRK4</id>
        <label>LZTS2</label>
    </interactant>
    <organismsDiffer>false</organismsDiffer>
    <experiments>3</experiments>
</comment>
<comment type="interaction">
    <interactant intactId="EBI-8639312">
        <id>P25800</id>
    </interactant>
    <interactant intactId="EBI-742610">
        <id>Q9Y6D9</id>
        <label>MAD1L1</label>
    </interactant>
    <organismsDiffer>false</organismsDiffer>
    <experiments>3</experiments>
</comment>
<comment type="interaction">
    <interactant intactId="EBI-8639312">
        <id>P25800</id>
    </interactant>
    <interactant intactId="EBI-12516603">
        <id>Q8WWY6</id>
        <label>MBD3L1</label>
    </interactant>
    <organismsDiffer>false</organismsDiffer>
    <experiments>3</experiments>
</comment>
<comment type="interaction">
    <interactant intactId="EBI-8639312">
        <id>P25800</id>
    </interactant>
    <interactant intactId="EBI-16439278">
        <id>Q6FHY5</id>
        <label>MEOX2</label>
    </interactant>
    <organismsDiffer>false</organismsDiffer>
    <experiments>3</experiments>
</comment>
<comment type="interaction">
    <interactant intactId="EBI-8639312">
        <id>P25800</id>
    </interactant>
    <interactant intactId="EBI-2555085">
        <id>Q8IVT2</id>
        <label>MISP</label>
    </interactant>
    <organismsDiffer>false</organismsDiffer>
    <experiments>8</experiments>
</comment>
<comment type="interaction">
    <interactant intactId="EBI-8639312">
        <id>P25800</id>
    </interactant>
    <interactant intactId="EBI-11599933">
        <id>Q4VC12</id>
        <label>MSS51</label>
    </interactant>
    <organismsDiffer>false</organismsDiffer>
    <experiments>3</experiments>
</comment>
<comment type="interaction">
    <interactant intactId="EBI-8639312">
        <id>P25800</id>
    </interactant>
    <interactant intactId="EBI-11526455">
        <id>Q9UJ70-2</id>
        <label>NAGK</label>
    </interactant>
    <organismsDiffer>false</organismsDiffer>
    <experiments>5</experiments>
</comment>
<comment type="interaction">
    <interactant intactId="EBI-8639312">
        <id>P25800</id>
    </interactant>
    <interactant intactId="EBI-721471">
        <id>O95182</id>
        <label>NDUFA7</label>
    </interactant>
    <organismsDiffer>false</organismsDiffer>
    <experiments>3</experiments>
</comment>
<comment type="interaction">
    <interactant intactId="EBI-8639312">
        <id>P25800</id>
    </interactant>
    <interactant intactId="EBI-741158">
        <id>Q96HA8</id>
        <label>NTAQ1</label>
    </interactant>
    <organismsDiffer>false</organismsDiffer>
    <experiments>3</experiments>
</comment>
<comment type="interaction">
    <interactant intactId="EBI-8639312">
        <id>P25800</id>
    </interactant>
    <interactant intactId="EBI-10178410">
        <id>Q86Y26</id>
        <label>NUTM1</label>
    </interactant>
    <organismsDiffer>false</organismsDiffer>
    <experiments>3</experiments>
</comment>
<comment type="interaction">
    <interactant intactId="EBI-8639312">
        <id>P25800</id>
    </interactant>
    <interactant intactId="EBI-713786">
        <id>Q8IXK0</id>
        <label>PHC2</label>
    </interactant>
    <organismsDiffer>false</organismsDiffer>
    <experiments>3</experiments>
</comment>
<comment type="interaction">
    <interactant intactId="EBI-8639312">
        <id>P25800</id>
    </interactant>
    <interactant intactId="EBI-79165">
        <id>Q9NRD5</id>
        <label>PICK1</label>
    </interactant>
    <organismsDiffer>false</organismsDiffer>
    <experiments>3</experiments>
</comment>
<comment type="interaction">
    <interactant intactId="EBI-8639312">
        <id>P25800</id>
    </interactant>
    <interactant intactId="EBI-2855862">
        <id>Q9BT43</id>
        <label>POLR3GL</label>
    </interactant>
    <organismsDiffer>false</organismsDiffer>
    <experiments>3</experiments>
</comment>
<comment type="interaction">
    <interactant intactId="EBI-8639312">
        <id>P25800</id>
    </interactant>
    <interactant intactId="EBI-1105153">
        <id>Q96KQ4</id>
        <label>PPP1R13B</label>
    </interactant>
    <organismsDiffer>false</organismsDiffer>
    <experiments>3</experiments>
</comment>
<comment type="interaction">
    <interactant intactId="EBI-8639312">
        <id>P25800</id>
    </interactant>
    <interactant intactId="EBI-11320284">
        <id>Q9NQX0</id>
        <label>PRDM6</label>
    </interactant>
    <organismsDiffer>false</organismsDiffer>
    <experiments>3</experiments>
</comment>
<comment type="interaction">
    <interactant intactId="EBI-8639312">
        <id>P25800</id>
    </interactant>
    <interactant intactId="EBI-372273">
        <id>P20618</id>
        <label>PSMB1</label>
    </interactant>
    <organismsDiffer>false</organismsDiffer>
    <experiments>3</experiments>
</comment>
<comment type="interaction">
    <interactant intactId="EBI-8639312">
        <id>P25800</id>
    </interactant>
    <interactant intactId="EBI-1047946">
        <id>P26045</id>
        <label>PTPN3</label>
    </interactant>
    <organismsDiffer>false</organismsDiffer>
    <experiments>6</experiments>
</comment>
<comment type="interaction">
    <interactant intactId="EBI-8639312">
        <id>P25800</id>
    </interactant>
    <interactant intactId="EBI-11954250">
        <id>P49023-2</id>
        <label>PXN</label>
    </interactant>
    <organismsDiffer>false</organismsDiffer>
    <experiments>5</experiments>
</comment>
<comment type="interaction">
    <interactant intactId="EBI-8639312">
        <id>P25800</id>
    </interactant>
    <interactant intactId="EBI-10203615">
        <id>Q99708-2</id>
        <label>RBBP8</label>
    </interactant>
    <organismsDiffer>false</organismsDiffer>
    <experiments>3</experiments>
</comment>
<comment type="interaction">
    <interactant intactId="EBI-8639312">
        <id>P25800</id>
    </interactant>
    <interactant intactId="EBI-948278">
        <id>Q15293</id>
        <label>RCN1</label>
    </interactant>
    <organismsDiffer>false</organismsDiffer>
    <experiments>3</experiments>
</comment>
<comment type="interaction">
    <interactant intactId="EBI-8639312">
        <id>P25800</id>
    </interactant>
    <interactant intactId="EBI-307352">
        <id>Q04864</id>
        <label>REL</label>
    </interactant>
    <organismsDiffer>false</organismsDiffer>
    <experiments>3</experiments>
</comment>
<comment type="interaction">
    <interactant intactId="EBI-8639312">
        <id>P25800</id>
    </interactant>
    <interactant intactId="EBI-3957636">
        <id>Q8IYX7</id>
        <label>SAXO1</label>
    </interactant>
    <organismsDiffer>false</organismsDiffer>
    <experiments>3</experiments>
</comment>
<comment type="interaction">
    <interactant intactId="EBI-8639312">
        <id>P25800</id>
    </interactant>
    <interactant intactId="EBI-3505701">
        <id>P35711</id>
        <label>SOX5</label>
    </interactant>
    <organismsDiffer>false</organismsDiffer>
    <experiments>3</experiments>
</comment>
<comment type="interaction">
    <interactant intactId="EBI-8639312">
        <id>P25800</id>
    </interactant>
    <interactant intactId="EBI-742688">
        <id>Q9NZD8</id>
        <label>SPG21</label>
    </interactant>
    <organismsDiffer>false</organismsDiffer>
    <experiments>3</experiments>
</comment>
<comment type="interaction">
    <interactant intactId="EBI-8639312">
        <id>P25800</id>
    </interactant>
    <interactant intactId="EBI-747142">
        <id>Q96C24</id>
        <label>SYTL4</label>
    </interactant>
    <organismsDiffer>false</organismsDiffer>
    <experiments>3</experiments>
</comment>
<comment type="interaction">
    <interactant intactId="EBI-8639312">
        <id>P25800</id>
    </interactant>
    <interactant intactId="EBI-742268">
        <id>O75478</id>
        <label>TADA2A</label>
    </interactant>
    <organismsDiffer>false</organismsDiffer>
    <experiments>3</experiments>
</comment>
<comment type="interaction">
    <interactant intactId="EBI-8639312">
        <id>P25800</id>
    </interactant>
    <interactant intactId="EBI-10172380">
        <id>Q5VWN6-2</id>
        <label>TASOR2</label>
    </interactant>
    <organismsDiffer>false</organismsDiffer>
    <experiments>3</experiments>
</comment>
<comment type="interaction">
    <interactant intactId="EBI-8639312">
        <id>P25800</id>
    </interactant>
    <interactant intactId="EBI-533224">
        <id>P15884</id>
        <label>TCF4</label>
    </interactant>
    <organismsDiffer>false</organismsDiffer>
    <experiments>3</experiments>
</comment>
<comment type="interaction">
    <interactant intactId="EBI-8639312">
        <id>P25800</id>
    </interactant>
    <interactant intactId="EBI-3923210">
        <id>Q8TDR4</id>
        <label>TCP10L</label>
    </interactant>
    <organismsDiffer>false</organismsDiffer>
    <experiments>3</experiments>
</comment>
<comment type="interaction">
    <interactant intactId="EBI-8639312">
        <id>P25800</id>
    </interactant>
    <interactant intactId="EBI-1105213">
        <id>Q9UBB9</id>
        <label>TFIP11</label>
    </interactant>
    <organismsDiffer>false</organismsDiffer>
    <experiments>7</experiments>
</comment>
<comment type="interaction">
    <interactant intactId="EBI-8639312">
        <id>P25800</id>
    </interactant>
    <interactant intactId="EBI-717810">
        <id>Q08117</id>
        <label>TLE5</label>
    </interactant>
    <organismsDiffer>false</organismsDiffer>
    <experiments>3</experiments>
</comment>
<comment type="interaction">
    <interactant intactId="EBI-8639312">
        <id>P25800</id>
    </interactant>
    <interactant intactId="EBI-719493">
        <id>P14373</id>
        <label>TRIM27</label>
    </interactant>
    <organismsDiffer>false</organismsDiffer>
    <experiments>3</experiments>
</comment>
<comment type="interaction">
    <interactant intactId="EBI-8639312">
        <id>P25800</id>
    </interactant>
    <interactant intactId="EBI-17716262">
        <id>Q9UPQ4-2</id>
        <label>TRIM35</label>
    </interactant>
    <organismsDiffer>false</organismsDiffer>
    <experiments>3</experiments>
</comment>
<comment type="interaction">
    <interactant intactId="EBI-8639312">
        <id>P25800</id>
    </interactant>
    <interactant intactId="EBI-2130429">
        <id>Q9BYV2</id>
        <label>TRIM54</label>
    </interactant>
    <organismsDiffer>false</organismsDiffer>
    <experiments>3</experiments>
</comment>
<comment type="interaction">
    <interactant intactId="EBI-8639312">
        <id>P25800</id>
    </interactant>
    <interactant intactId="EBI-739485">
        <id>Q9Y3Q8</id>
        <label>TSC22D4</label>
    </interactant>
    <organismsDiffer>false</organismsDiffer>
    <experiments>3</experiments>
</comment>
<comment type="interaction">
    <interactant intactId="EBI-8639312">
        <id>P25800</id>
    </interactant>
    <interactant intactId="EBI-11153325">
        <id>Q9NUQ7</id>
        <label>UFSP2</label>
    </interactant>
    <organismsDiffer>false</organismsDiffer>
    <experiments>3</experiments>
</comment>
<comment type="interaction">
    <interactant intactId="EBI-8639312">
        <id>P25800</id>
    </interactant>
    <interactant intactId="EBI-12157345">
        <id>Q8TAS1-2</id>
        <label>UHMK1</label>
    </interactant>
    <organismsDiffer>false</organismsDiffer>
    <experiments>3</experiments>
</comment>
<comment type="interaction">
    <interactant intactId="EBI-8639312">
        <id>P25800</id>
    </interactant>
    <interactant intactId="EBI-12817837">
        <id>Q9H9P5-5</id>
        <label>UNKL</label>
    </interactant>
    <organismsDiffer>false</organismsDiffer>
    <experiments>4</experiments>
</comment>
<comment type="interaction">
    <interactant intactId="EBI-8639312">
        <id>P25800</id>
    </interactant>
    <interactant intactId="EBI-473284">
        <id>Q9BVJ6</id>
        <label>UTP14A</label>
    </interactant>
    <organismsDiffer>false</organismsDiffer>
    <experiments>3</experiments>
</comment>
<comment type="interaction">
    <interactant intactId="EBI-8639312">
        <id>P25800</id>
    </interactant>
    <interactant intactId="EBI-357430">
        <id>P61758</id>
        <label>VBP1</label>
    </interactant>
    <organismsDiffer>false</organismsDiffer>
    <experiments>3</experiments>
</comment>
<comment type="interaction">
    <interactant intactId="EBI-8639312">
        <id>P25800</id>
    </interactant>
    <interactant intactId="EBI-740718">
        <id>O43298</id>
        <label>ZBTB43</label>
    </interactant>
    <organismsDiffer>false</organismsDiffer>
    <experiments>8</experiments>
</comment>
<comment type="interaction">
    <interactant intactId="EBI-8639312">
        <id>P25800</id>
    </interactant>
    <interactant intactId="EBI-17494306">
        <id>Q8NAP8</id>
        <label>ZBTB8B</label>
    </interactant>
    <organismsDiffer>false</organismsDiffer>
    <experiments>3</experiments>
</comment>
<comment type="interaction">
    <interactant intactId="EBI-8639312">
        <id>P25800</id>
    </interactant>
    <interactant intactId="EBI-748373">
        <id>Q6PEW1</id>
        <label>ZCCHC12</label>
    </interactant>
    <organismsDiffer>false</organismsDiffer>
    <experiments>3</experiments>
</comment>
<comment type="interaction">
    <interactant intactId="EBI-8639312">
        <id>P25800</id>
    </interactant>
    <interactant intactId="EBI-11419867">
        <id>Q8TF47</id>
        <label>ZFP90</label>
    </interactant>
    <organismsDiffer>false</organismsDiffer>
    <experiments>3</experiments>
</comment>
<comment type="interaction">
    <interactant intactId="EBI-8639312">
        <id>P25800</id>
    </interactant>
    <interactant intactId="EBI-2849334">
        <id>P52747</id>
        <label>ZNF143</label>
    </interactant>
    <organismsDiffer>false</organismsDiffer>
    <experiments>3</experiments>
</comment>
<comment type="interaction">
    <interactant intactId="EBI-8639312">
        <id>P25800</id>
    </interactant>
    <interactant intactId="EBI-12272076">
        <id>Q13360-2</id>
        <label>ZNF177</label>
    </interactant>
    <organismsDiffer>false</organismsDiffer>
    <experiments>3</experiments>
</comment>
<comment type="interaction">
    <interactant intactId="EBI-8639312">
        <id>P25800</id>
    </interactant>
    <interactant intactId="EBI-12884200">
        <id>P17023</id>
        <label>ZNF19</label>
    </interactant>
    <organismsDiffer>false</organismsDiffer>
    <experiments>3</experiments>
</comment>
<comment type="interaction">
    <interactant intactId="EBI-8639312">
        <id>P25800</id>
    </interactant>
    <interactant intactId="EBI-3937106">
        <id>Q9P2Y4</id>
        <label>ZNF219</label>
    </interactant>
    <organismsDiffer>false</organismsDiffer>
    <experiments>3</experiments>
</comment>
<comment type="interaction">
    <interactant intactId="EBI-8639312">
        <id>P25800</id>
    </interactant>
    <interactant intactId="EBI-707773">
        <id>P17028</id>
        <label>ZNF24</label>
    </interactant>
    <organismsDiffer>false</organismsDiffer>
    <experiments>5</experiments>
</comment>
<comment type="interaction">
    <interactant intactId="EBI-8639312">
        <id>P25800</id>
    </interactant>
    <interactant intactId="EBI-740727">
        <id>Q8TAU3</id>
        <label>ZNF417</label>
    </interactant>
    <organismsDiffer>false</organismsDiffer>
    <experiments>3</experiments>
</comment>
<comment type="interaction">
    <interactant intactId="EBI-8639312">
        <id>P25800</id>
    </interactant>
    <interactant intactId="EBI-2555738">
        <id>Q14592</id>
        <label>ZNF460</label>
    </interactant>
    <organismsDiffer>false</organismsDiffer>
    <experiments>3</experiments>
</comment>
<comment type="interaction">
    <interactant intactId="EBI-8639312">
        <id>P25800</id>
    </interactant>
    <interactant intactId="EBI-10269136">
        <id>Q8NB15</id>
        <label>ZNF511</label>
    </interactant>
    <organismsDiffer>false</organismsDiffer>
    <experiments>6</experiments>
</comment>
<comment type="interaction">
    <interactant intactId="EBI-8639312">
        <id>P25800</id>
    </interactant>
    <interactant intactId="EBI-11035148">
        <id>Q8TF50</id>
        <label>ZNF526</label>
    </interactant>
    <organismsDiffer>false</organismsDiffer>
    <experiments>3</experiments>
</comment>
<comment type="interaction">
    <interactant intactId="EBI-8639312">
        <id>P25800</id>
    </interactant>
    <interactant intactId="EBI-4395669">
        <id>Q6ZNG0</id>
        <label>ZNF620</label>
    </interactant>
    <organismsDiffer>false</organismsDiffer>
    <experiments>3</experiments>
</comment>
<comment type="interaction">
    <interactant intactId="EBI-8639312">
        <id>P25800</id>
    </interactant>
    <interactant intactId="EBI-12939666">
        <id>Q96N77-2</id>
        <label>ZNF641</label>
    </interactant>
    <organismsDiffer>false</organismsDiffer>
    <experiments>3</experiments>
</comment>
<comment type="interaction">
    <interactant intactId="EBI-8639312">
        <id>P25800</id>
    </interactant>
    <interactant intactId="EBI-4395732">
        <id>P0C7X2</id>
        <label>ZNF688</label>
    </interactant>
    <organismsDiffer>false</organismsDiffer>
    <experiments>3</experiments>
</comment>
<comment type="interaction">
    <interactant intactId="EBI-8639312">
        <id>P25800</id>
    </interactant>
    <interactant intactId="EBI-7254550">
        <id>P36508</id>
        <label>ZNF76</label>
    </interactant>
    <organismsDiffer>false</organismsDiffer>
    <experiments>3</experiments>
</comment>
<comment type="interaction">
    <interactant intactId="EBI-8639312">
        <id>P25800</id>
    </interactant>
    <interactant intactId="EBI-2849074">
        <id>P51523</id>
        <label>ZNF84</label>
    </interactant>
    <organismsDiffer>false</organismsDiffer>
    <experiments>3</experiments>
</comment>
<comment type="subcellular location">
    <subcellularLocation>
        <location evidence="1">Nucleus</location>
    </subcellularLocation>
</comment>
<comment type="alternative products">
    <event type="alternative splicing"/>
    <isoform>
        <id>P25800-1</id>
        <name>1</name>
        <sequence type="displayed"/>
    </isoform>
    <isoform>
        <id>P25800-2</id>
        <name>2</name>
        <sequence type="described" ref="VSP_046664"/>
    </isoform>
</comment>
<comment type="tissue specificity">
    <text evidence="4">Expressed mainly in the central nervous. Low level of expression in other tissues including thymus.</text>
</comment>
<comment type="disease">
    <text>A chromosomal aberration involving LMO1 may be a cause of a form of T-cell acute lymphoblastic leukemia (T-ALL). Translocation t(11,14)(p15;q11) with TCRD.</text>
</comment>
<comment type="sequence caution" evidence="6">
    <conflict type="erroneous initiation">
        <sequence resource="EMBL-CDS" id="AAH39512"/>
    </conflict>
    <text>Extended N-terminus.</text>
</comment>
<comment type="online information" name="Atlas of Genetics and Cytogenetics in Oncology and Haematology">
    <link uri="https://atlasgeneticsoncology.org/gene/33/LMO1"/>
</comment>
<organism>
    <name type="scientific">Homo sapiens</name>
    <name type="common">Human</name>
    <dbReference type="NCBI Taxonomy" id="9606"/>
    <lineage>
        <taxon>Eukaryota</taxon>
        <taxon>Metazoa</taxon>
        <taxon>Chordata</taxon>
        <taxon>Craniata</taxon>
        <taxon>Vertebrata</taxon>
        <taxon>Euteleostomi</taxon>
        <taxon>Mammalia</taxon>
        <taxon>Eutheria</taxon>
        <taxon>Euarchontoglires</taxon>
        <taxon>Primates</taxon>
        <taxon>Haplorrhini</taxon>
        <taxon>Catarrhini</taxon>
        <taxon>Hominidae</taxon>
        <taxon>Homo</taxon>
    </lineage>
</organism>
<keyword id="KW-0025">Alternative splicing</keyword>
<keyword id="KW-0160">Chromosomal rearrangement</keyword>
<keyword id="KW-0440">LIM domain</keyword>
<keyword id="KW-0479">Metal-binding</keyword>
<keyword id="KW-0539">Nucleus</keyword>
<keyword id="KW-1267">Proteomics identification</keyword>
<keyword id="KW-0656">Proto-oncogene</keyword>
<keyword id="KW-1185">Reference proteome</keyword>
<keyword id="KW-0677">Repeat</keyword>
<keyword id="KW-0862">Zinc</keyword>
<proteinExistence type="evidence at protein level"/>
<feature type="chain" id="PRO_0000075894" description="Rhombotin-1">
    <location>
        <begin position="1"/>
        <end position="156"/>
    </location>
</feature>
<feature type="domain" description="LIM zinc-binding 1" evidence="2">
    <location>
        <begin position="24"/>
        <end position="83"/>
    </location>
</feature>
<feature type="domain" description="LIM zinc-binding 2" evidence="2">
    <location>
        <begin position="88"/>
        <end position="147"/>
    </location>
</feature>
<feature type="splice variant" id="VSP_046664" description="In isoform 2." evidence="5">
    <original>MMVLDKEDG</original>
    <variation>MVLDQEDG</variation>
    <location>
        <begin position="1"/>
        <end position="9"/>
    </location>
</feature>
<reference key="1">
    <citation type="journal article" date="1989" name="Mol. Cell. Biol.">
        <title>The t(11;14)(p15;q11) in a T-cell acute lymphoblastic leukemia cell line activates multiple transcripts, including Ttg-1, a gene encoding a potential zinc finger protein.</title>
        <authorList>
            <person name="McGuire E.A."/>
            <person name="Hockett R.D."/>
            <person name="Pollock K.M."/>
            <person name="Bartholdi M.F."/>
            <person name="O'Brien S.J."/>
            <person name="Korsmeyer S.J."/>
        </authorList>
    </citation>
    <scope>NUCLEOTIDE SEQUENCE [MRNA] (ISOFORM 1)</scope>
</reference>
<reference key="2">
    <citation type="journal article" date="1990" name="EMBO J.">
        <title>An unusual structure of a putative T cell oncogene which allows production of similar proteins from distinct mRNAs.</title>
        <authorList>
            <person name="Boehm T."/>
            <person name="Greenberg J.M."/>
            <person name="Buluwela L."/>
            <person name="Lavenir I."/>
            <person name="Forster A."/>
            <person name="Rabbitts T.H."/>
        </authorList>
    </citation>
    <scope>NUCLEOTIDE SEQUENCE [MRNA] (ISOFORM 1)</scope>
</reference>
<reference key="3">
    <citation type="journal article" date="1991" name="Blood">
        <title>T-cell translocation gene 1 (Ttg-1) encodes a nuclear protein normally expressed in neural lineage cells.</title>
        <authorList>
            <person name="McGuire E.A."/>
            <person name="Davis A.R."/>
            <person name="Korsmeyer S.J."/>
        </authorList>
    </citation>
    <scope>NUCLEOTIDE SEQUENCE [GENOMIC DNA]</scope>
    <scope>FUNCTION</scope>
</reference>
<reference key="4">
    <citation type="journal article" date="2001" name="Cytogenet. Cell Genet.">
        <title>Comparative architectural aspects of regions of conserved synteny on human chromosome 11p15.3 and mouse chromosome 7 (including genes WEE1 and LMO1).</title>
        <authorList>
            <person name="Cichutek A."/>
            <person name="Brueckmann T."/>
            <person name="Seipel B."/>
            <person name="Hauser H."/>
            <person name="Schlaubitz S."/>
            <person name="Prawitt D."/>
            <person name="Hankeln T."/>
            <person name="Schmidt E.R."/>
            <person name="Winterpacht A."/>
            <person name="Zabel B.U."/>
        </authorList>
    </citation>
    <scope>NUCLEOTIDE SEQUENCE [GENOMIC DNA]</scope>
    <source>
        <tissue>Blood</tissue>
    </source>
</reference>
<reference key="5">
    <citation type="journal article" date="2006" name="Nature">
        <title>Human chromosome 11 DNA sequence and analysis including novel gene identification.</title>
        <authorList>
            <person name="Taylor T.D."/>
            <person name="Noguchi H."/>
            <person name="Totoki Y."/>
            <person name="Toyoda A."/>
            <person name="Kuroki Y."/>
            <person name="Dewar K."/>
            <person name="Lloyd C."/>
            <person name="Itoh T."/>
            <person name="Takeda T."/>
            <person name="Kim D.-W."/>
            <person name="She X."/>
            <person name="Barlow K.F."/>
            <person name="Bloom T."/>
            <person name="Bruford E."/>
            <person name="Chang J.L."/>
            <person name="Cuomo C.A."/>
            <person name="Eichler E."/>
            <person name="FitzGerald M.G."/>
            <person name="Jaffe D.B."/>
            <person name="LaButti K."/>
            <person name="Nicol R."/>
            <person name="Park H.-S."/>
            <person name="Seaman C."/>
            <person name="Sougnez C."/>
            <person name="Yang X."/>
            <person name="Zimmer A.R."/>
            <person name="Zody M.C."/>
            <person name="Birren B.W."/>
            <person name="Nusbaum C."/>
            <person name="Fujiyama A."/>
            <person name="Hattori M."/>
            <person name="Rogers J."/>
            <person name="Lander E.S."/>
            <person name="Sakaki Y."/>
        </authorList>
    </citation>
    <scope>NUCLEOTIDE SEQUENCE [LARGE SCALE GENOMIC DNA]</scope>
</reference>
<reference key="6">
    <citation type="journal article" date="2004" name="Genome Res.">
        <title>The status, quality, and expansion of the NIH full-length cDNA project: the Mammalian Gene Collection (MGC).</title>
        <authorList>
            <consortium name="The MGC Project Team"/>
        </authorList>
    </citation>
    <scope>NUCLEOTIDE SEQUENCE [LARGE SCALE MRNA] (ISOFORMS 1 AND 2)</scope>
    <source>
        <tissue>Eye</tissue>
    </source>
</reference>
<reference key="7">
    <citation type="journal article" date="1991" name="Oncogene">
        <title>Developmentally regulated and tissue specific expression of mRNAs encoding the two alternative forms of the LIM domain oncogene rhombotin: evidence for thymus expression.</title>
        <authorList>
            <person name="Boehm T."/>
            <person name="Spillantini M.G."/>
            <person name="Sofroniew M.V."/>
            <person name="Surani M.A."/>
            <person name="Rabbitts T.H."/>
        </authorList>
    </citation>
    <scope>TISSUE SPECIFICITY</scope>
</reference>
<gene>
    <name type="primary">LMO1</name>
    <name type="synonym">RBTN1</name>
    <name type="synonym">RHOM1</name>
    <name type="synonym">TTG1</name>
</gene>